<protein>
    <recommendedName>
        <fullName evidence="1">Hydroxylamine reductase</fullName>
        <ecNumber evidence="1">1.7.99.1</ecNumber>
    </recommendedName>
    <alternativeName>
        <fullName evidence="1">Hybrid-cluster protein</fullName>
        <shortName evidence="1">HCP</shortName>
    </alternativeName>
    <alternativeName>
        <fullName evidence="1">Prismane protein</fullName>
    </alternativeName>
</protein>
<dbReference type="EC" id="1.7.99.1" evidence="1"/>
<dbReference type="EMBL" id="CP000478">
    <property type="protein sequence ID" value="ABK19117.1"/>
    <property type="molecule type" value="Genomic_DNA"/>
</dbReference>
<dbReference type="RefSeq" id="WP_011700242.1">
    <property type="nucleotide sequence ID" value="NC_008554.1"/>
</dbReference>
<dbReference type="SMR" id="A0LNW5"/>
<dbReference type="FunCoup" id="A0LNW5">
    <property type="interactions" value="65"/>
</dbReference>
<dbReference type="STRING" id="335543.Sfum_3446"/>
<dbReference type="KEGG" id="sfu:Sfum_3446"/>
<dbReference type="eggNOG" id="COG1151">
    <property type="taxonomic scope" value="Bacteria"/>
</dbReference>
<dbReference type="HOGENOM" id="CLU_038344_2_0_7"/>
<dbReference type="InParanoid" id="A0LNW5"/>
<dbReference type="OrthoDB" id="9761526at2"/>
<dbReference type="Proteomes" id="UP000001784">
    <property type="component" value="Chromosome"/>
</dbReference>
<dbReference type="GO" id="GO:0005737">
    <property type="term" value="C:cytoplasm"/>
    <property type="evidence" value="ECO:0007669"/>
    <property type="project" value="UniProtKB-SubCell"/>
</dbReference>
<dbReference type="GO" id="GO:0051539">
    <property type="term" value="F:4 iron, 4 sulfur cluster binding"/>
    <property type="evidence" value="ECO:0007669"/>
    <property type="project" value="UniProtKB-KW"/>
</dbReference>
<dbReference type="GO" id="GO:0050418">
    <property type="term" value="F:hydroxylamine reductase activity"/>
    <property type="evidence" value="ECO:0007669"/>
    <property type="project" value="UniProtKB-UniRule"/>
</dbReference>
<dbReference type="GO" id="GO:0046872">
    <property type="term" value="F:metal ion binding"/>
    <property type="evidence" value="ECO:0007669"/>
    <property type="project" value="UniProtKB-KW"/>
</dbReference>
<dbReference type="GO" id="GO:0004601">
    <property type="term" value="F:peroxidase activity"/>
    <property type="evidence" value="ECO:0007669"/>
    <property type="project" value="TreeGrafter"/>
</dbReference>
<dbReference type="GO" id="GO:0042542">
    <property type="term" value="P:response to hydrogen peroxide"/>
    <property type="evidence" value="ECO:0007669"/>
    <property type="project" value="TreeGrafter"/>
</dbReference>
<dbReference type="CDD" id="cd01914">
    <property type="entry name" value="HCP"/>
    <property type="match status" value="1"/>
</dbReference>
<dbReference type="FunFam" id="1.20.1270.20:FF:000001">
    <property type="entry name" value="Hydroxylamine reductase"/>
    <property type="match status" value="1"/>
</dbReference>
<dbReference type="FunFam" id="3.40.50.2030:FF:000001">
    <property type="entry name" value="Hydroxylamine reductase"/>
    <property type="match status" value="1"/>
</dbReference>
<dbReference type="FunFam" id="3.40.50.2030:FF:000002">
    <property type="entry name" value="Hydroxylamine reductase"/>
    <property type="match status" value="1"/>
</dbReference>
<dbReference type="Gene3D" id="1.20.1270.20">
    <property type="match status" value="2"/>
</dbReference>
<dbReference type="Gene3D" id="3.40.50.2030">
    <property type="match status" value="2"/>
</dbReference>
<dbReference type="HAMAP" id="MF_00069">
    <property type="entry name" value="Hydroxylam_reduct"/>
    <property type="match status" value="1"/>
</dbReference>
<dbReference type="InterPro" id="IPR004137">
    <property type="entry name" value="HCP/CODH"/>
</dbReference>
<dbReference type="InterPro" id="IPR010048">
    <property type="entry name" value="Hydroxylam_reduct"/>
</dbReference>
<dbReference type="InterPro" id="IPR016099">
    <property type="entry name" value="Prismane-like_a/b-sand"/>
</dbReference>
<dbReference type="InterPro" id="IPR011254">
    <property type="entry name" value="Prismane-like_sf"/>
</dbReference>
<dbReference type="InterPro" id="IPR016100">
    <property type="entry name" value="Prismane_a-bundle"/>
</dbReference>
<dbReference type="NCBIfam" id="TIGR01703">
    <property type="entry name" value="hybrid_clust"/>
    <property type="match status" value="1"/>
</dbReference>
<dbReference type="NCBIfam" id="NF003658">
    <property type="entry name" value="PRK05290.1"/>
    <property type="match status" value="1"/>
</dbReference>
<dbReference type="PANTHER" id="PTHR30109">
    <property type="entry name" value="HYDROXYLAMINE REDUCTASE"/>
    <property type="match status" value="1"/>
</dbReference>
<dbReference type="PANTHER" id="PTHR30109:SF0">
    <property type="entry name" value="HYDROXYLAMINE REDUCTASE"/>
    <property type="match status" value="1"/>
</dbReference>
<dbReference type="Pfam" id="PF03063">
    <property type="entry name" value="Prismane"/>
    <property type="match status" value="1"/>
</dbReference>
<dbReference type="PIRSF" id="PIRSF000076">
    <property type="entry name" value="HCP"/>
    <property type="match status" value="1"/>
</dbReference>
<dbReference type="SUPFAM" id="SSF56821">
    <property type="entry name" value="Prismane protein-like"/>
    <property type="match status" value="1"/>
</dbReference>
<feature type="chain" id="PRO_1000009176" description="Hydroxylamine reductase">
    <location>
        <begin position="1"/>
        <end position="542"/>
    </location>
</feature>
<feature type="binding site" evidence="1">
    <location>
        <position position="3"/>
    </location>
    <ligand>
        <name>[4Fe-4S] cluster</name>
        <dbReference type="ChEBI" id="CHEBI:49883"/>
    </ligand>
</feature>
<feature type="binding site" evidence="1">
    <location>
        <position position="6"/>
    </location>
    <ligand>
        <name>[4Fe-4S] cluster</name>
        <dbReference type="ChEBI" id="CHEBI:49883"/>
    </ligand>
</feature>
<feature type="binding site" evidence="1">
    <location>
        <position position="15"/>
    </location>
    <ligand>
        <name>[4Fe-4S] cluster</name>
        <dbReference type="ChEBI" id="CHEBI:49883"/>
    </ligand>
</feature>
<feature type="binding site" evidence="1">
    <location>
        <position position="21"/>
    </location>
    <ligand>
        <name>[4Fe-4S] cluster</name>
        <dbReference type="ChEBI" id="CHEBI:49883"/>
    </ligand>
</feature>
<feature type="binding site" evidence="1">
    <location>
        <position position="243"/>
    </location>
    <ligand>
        <name>hybrid [4Fe-2O-2S] cluster</name>
        <dbReference type="ChEBI" id="CHEBI:60519"/>
    </ligand>
</feature>
<feature type="binding site" evidence="1">
    <location>
        <position position="267"/>
    </location>
    <ligand>
        <name>hybrid [4Fe-2O-2S] cluster</name>
        <dbReference type="ChEBI" id="CHEBI:60519"/>
    </ligand>
</feature>
<feature type="binding site" evidence="1">
    <location>
        <position position="311"/>
    </location>
    <ligand>
        <name>hybrid [4Fe-2O-2S] cluster</name>
        <dbReference type="ChEBI" id="CHEBI:60519"/>
    </ligand>
</feature>
<feature type="binding site" description="via persulfide group" evidence="1">
    <location>
        <position position="398"/>
    </location>
    <ligand>
        <name>hybrid [4Fe-2O-2S] cluster</name>
        <dbReference type="ChEBI" id="CHEBI:60519"/>
    </ligand>
</feature>
<feature type="binding site" evidence="1">
    <location>
        <position position="426"/>
    </location>
    <ligand>
        <name>hybrid [4Fe-2O-2S] cluster</name>
        <dbReference type="ChEBI" id="CHEBI:60519"/>
    </ligand>
</feature>
<feature type="binding site" evidence="1">
    <location>
        <position position="451"/>
    </location>
    <ligand>
        <name>hybrid [4Fe-2O-2S] cluster</name>
        <dbReference type="ChEBI" id="CHEBI:60519"/>
    </ligand>
</feature>
<feature type="binding site" evidence="1">
    <location>
        <position position="485"/>
    </location>
    <ligand>
        <name>hybrid [4Fe-2O-2S] cluster</name>
        <dbReference type="ChEBI" id="CHEBI:60519"/>
    </ligand>
</feature>
<feature type="binding site" evidence="1">
    <location>
        <position position="487"/>
    </location>
    <ligand>
        <name>hybrid [4Fe-2O-2S] cluster</name>
        <dbReference type="ChEBI" id="CHEBI:60519"/>
    </ligand>
</feature>
<feature type="modified residue" description="Cysteine persulfide" evidence="1">
    <location>
        <position position="398"/>
    </location>
</feature>
<accession>A0LNW5</accession>
<name>HCP_SYNFM</name>
<gene>
    <name evidence="1" type="primary">hcp</name>
    <name type="ordered locus">Sfum_3446</name>
</gene>
<proteinExistence type="inferred from homology"/>
<sequence>MFCYQCEQTAKGEGCTKIGVCGKQPEVADLQDLLLYALKGLALHAVEGAKVGVNDHETNVFTCEALFSTLTNVNFDPARFQVLIPRVVEYREKLKAKVKAAGGKVDFADPAATFTPAKTLEGLVAQGANVGLKSEPELPPDIVSLKHTLLFGLKGISAYADHANILGQHDDAVYAFIYEALAATLRKDIELGDWLKLVLKCGEMNLRTMELLDAANTGVYGHPVPTSVPLGPKQGKAILVSGHDLKDLEELLKQTEGKGINIYTHGEMLPTHGYPGLKKYAHFYGHYGTAWQNQQKEFSKFPGAILMTTNCIQKPQQAYTGNIFTTGLVGWPDVPHVTNRDFSPVIERALALPGFPETVNGKSVMVGFGRNTILGVADKVIEAVKNKNIRHFFLVAGCDGAKPGRNYYTEFVEKVPKDCVVLTLACGKFRFFDKDLGTIGGLPRLMDVGQCNDAYSAIQVAVALAKAFNCGVNDLPLSLVLSWYEQKAVAILLTLLYLGIRNIRLGPSLPAFVSGNVLDVLVKNFDIKPITTPDEDLKAILG</sequence>
<keyword id="KW-0004">4Fe-4S</keyword>
<keyword id="KW-0963">Cytoplasm</keyword>
<keyword id="KW-0408">Iron</keyword>
<keyword id="KW-0411">Iron-sulfur</keyword>
<keyword id="KW-0479">Metal-binding</keyword>
<keyword id="KW-0560">Oxidoreductase</keyword>
<keyword id="KW-1185">Reference proteome</keyword>
<evidence type="ECO:0000255" key="1">
    <source>
        <dbReference type="HAMAP-Rule" id="MF_00069"/>
    </source>
</evidence>
<reference key="1">
    <citation type="submission" date="2006-10" db="EMBL/GenBank/DDBJ databases">
        <title>Complete sequence of Syntrophobacter fumaroxidans MPOB.</title>
        <authorList>
            <consortium name="US DOE Joint Genome Institute"/>
            <person name="Copeland A."/>
            <person name="Lucas S."/>
            <person name="Lapidus A."/>
            <person name="Barry K."/>
            <person name="Detter J.C."/>
            <person name="Glavina del Rio T."/>
            <person name="Hammon N."/>
            <person name="Israni S."/>
            <person name="Pitluck S."/>
            <person name="Goltsman E.G."/>
            <person name="Martinez M."/>
            <person name="Schmutz J."/>
            <person name="Larimer F."/>
            <person name="Land M."/>
            <person name="Hauser L."/>
            <person name="Kyrpides N."/>
            <person name="Kim E."/>
            <person name="Boone D.R."/>
            <person name="Brockman F."/>
            <person name="Culley D."/>
            <person name="Ferry J."/>
            <person name="Gunsalus R."/>
            <person name="McInerney M.J."/>
            <person name="Morrison M."/>
            <person name="Plugge C."/>
            <person name="Rohlin L."/>
            <person name="Scholten J."/>
            <person name="Sieber J."/>
            <person name="Stams A.J.M."/>
            <person name="Worm P."/>
            <person name="Henstra A.M."/>
            <person name="Richardson P."/>
        </authorList>
    </citation>
    <scope>NUCLEOTIDE SEQUENCE [LARGE SCALE GENOMIC DNA]</scope>
    <source>
        <strain>DSM 10017 / MPOB</strain>
    </source>
</reference>
<organism>
    <name type="scientific">Syntrophobacter fumaroxidans (strain DSM 10017 / MPOB)</name>
    <dbReference type="NCBI Taxonomy" id="335543"/>
    <lineage>
        <taxon>Bacteria</taxon>
        <taxon>Pseudomonadati</taxon>
        <taxon>Thermodesulfobacteriota</taxon>
        <taxon>Syntrophobacteria</taxon>
        <taxon>Syntrophobacterales</taxon>
        <taxon>Syntrophobacteraceae</taxon>
        <taxon>Syntrophobacter</taxon>
    </lineage>
</organism>
<comment type="function">
    <text evidence="1">Catalyzes the reduction of hydroxylamine to form NH(3) and H(2)O.</text>
</comment>
<comment type="catalytic activity">
    <reaction evidence="1">
        <text>A + NH4(+) + H2O = hydroxylamine + AH2 + H(+)</text>
        <dbReference type="Rhea" id="RHEA:22052"/>
        <dbReference type="ChEBI" id="CHEBI:13193"/>
        <dbReference type="ChEBI" id="CHEBI:15377"/>
        <dbReference type="ChEBI" id="CHEBI:15378"/>
        <dbReference type="ChEBI" id="CHEBI:15429"/>
        <dbReference type="ChEBI" id="CHEBI:17499"/>
        <dbReference type="ChEBI" id="CHEBI:28938"/>
        <dbReference type="EC" id="1.7.99.1"/>
    </reaction>
</comment>
<comment type="cofactor">
    <cofactor evidence="1">
        <name>[4Fe-4S] cluster</name>
        <dbReference type="ChEBI" id="CHEBI:49883"/>
    </cofactor>
    <text evidence="1">Binds 1 [4Fe-4S] cluster.</text>
</comment>
<comment type="cofactor">
    <cofactor evidence="1">
        <name>hybrid [4Fe-2O-2S] cluster</name>
        <dbReference type="ChEBI" id="CHEBI:60519"/>
    </cofactor>
    <text evidence="1">Binds 1 hybrid [4Fe-2O-2S] cluster.</text>
</comment>
<comment type="subcellular location">
    <subcellularLocation>
        <location evidence="1">Cytoplasm</location>
    </subcellularLocation>
</comment>
<comment type="similarity">
    <text evidence="1">Belongs to the HCP family.</text>
</comment>